<comment type="developmental stage">
    <text>Overexpressed in Wilms' tumor samples.</text>
</comment>
<comment type="sequence caution" evidence="5">
    <conflict type="frameshift">
        <sequence resource="EMBL-CDS" id="BAA90470"/>
    </conflict>
</comment>
<accession>Q6U949</accession>
<accession>A5PKV8</accession>
<accession>A6NNQ2</accession>
<accession>Q7Z712</accession>
<accession>Q9P2W0</accession>
<evidence type="ECO:0000256" key="1">
    <source>
        <dbReference type="SAM" id="MobiDB-lite"/>
    </source>
</evidence>
<evidence type="ECO:0000269" key="2">
    <source>
    </source>
</evidence>
<evidence type="ECO:0000269" key="3">
    <source>
    </source>
</evidence>
<evidence type="ECO:0000269" key="4">
    <source ref="3"/>
</evidence>
<evidence type="ECO:0000305" key="5"/>
<dbReference type="EMBL" id="AB030733">
    <property type="protein sequence ID" value="BAA90470.1"/>
    <property type="status" value="ALT_FRAME"/>
    <property type="molecule type" value="mRNA"/>
</dbReference>
<dbReference type="EMBL" id="AY149295">
    <property type="protein sequence ID" value="AAP50262.1"/>
    <property type="molecule type" value="mRNA"/>
</dbReference>
<dbReference type="EMBL" id="AY375532">
    <property type="protein sequence ID" value="AAQ86595.1"/>
    <property type="molecule type" value="Genomic_DNA"/>
</dbReference>
<dbReference type="EMBL" id="AC132217">
    <property type="status" value="NOT_ANNOTATED_CDS"/>
    <property type="molecule type" value="Genomic_DNA"/>
</dbReference>
<dbReference type="EMBL" id="BC142634">
    <property type="protein sequence ID" value="AAI42635.1"/>
    <property type="molecule type" value="mRNA"/>
</dbReference>
<dbReference type="EMBL" id="BC142691">
    <property type="protein sequence ID" value="AAI42692.1"/>
    <property type="molecule type" value="mRNA"/>
</dbReference>
<dbReference type="PIR" id="JC7217">
    <property type="entry name" value="JC7217"/>
</dbReference>
<dbReference type="BioMuta" id="HGNC:14062"/>
<dbReference type="DMDM" id="126302557"/>
<dbReference type="MassIVE" id="Q6U949"/>
<dbReference type="ProteomicsDB" id="67400"/>
<dbReference type="AGR" id="HGNC:14062"/>
<dbReference type="GeneCards" id="IGF2-AS"/>
<dbReference type="HGNC" id="HGNC:14062">
    <property type="gene designation" value="IGF2-AS"/>
</dbReference>
<dbReference type="MIM" id="610146">
    <property type="type" value="gene"/>
</dbReference>
<dbReference type="neXtProt" id="NX_Q6U949"/>
<dbReference type="InParanoid" id="Q6U949"/>
<dbReference type="PAN-GO" id="Q6U949">
    <property type="GO annotations" value="0 GO annotations based on evolutionary models"/>
</dbReference>
<dbReference type="PhylomeDB" id="Q6U949"/>
<dbReference type="TreeFam" id="TF341861"/>
<dbReference type="PathwayCommons" id="Q6U949"/>
<dbReference type="Pharos" id="Q6U949">
    <property type="development level" value="Tdark"/>
</dbReference>
<dbReference type="PRO" id="PR:Q6U949"/>
<dbReference type="Proteomes" id="UP000005640">
    <property type="component" value="Unplaced"/>
</dbReference>
<dbReference type="RNAct" id="Q6U949">
    <property type="molecule type" value="protein"/>
</dbReference>
<name>IG2AS_HUMAN</name>
<gene>
    <name type="primary">IGF2-AS</name>
    <name type="synonym">IGF2-AS1</name>
    <name type="synonym">IGF2AS</name>
</gene>
<feature type="chain" id="PRO_0000076224" description="Putative insulin-like growth factor 2 antisense gene protein">
    <location>
        <begin position="1"/>
        <end position="168"/>
    </location>
</feature>
<feature type="region of interest" description="Disordered" evidence="1">
    <location>
        <begin position="1"/>
        <end position="91"/>
    </location>
</feature>
<feature type="region of interest" description="Disordered" evidence="1">
    <location>
        <begin position="108"/>
        <end position="168"/>
    </location>
</feature>
<feature type="compositionally biased region" description="Basic residues" evidence="1">
    <location>
        <begin position="59"/>
        <end position="70"/>
    </location>
</feature>
<feature type="compositionally biased region" description="Basic residues" evidence="1">
    <location>
        <begin position="159"/>
        <end position="168"/>
    </location>
</feature>
<feature type="sequence variant" id="VAR_024844" description="In dbSNP:rs17883406." evidence="4">
    <original>S</original>
    <variation>I</variation>
    <location>
        <position position="106"/>
    </location>
</feature>
<feature type="sequence variant" id="VAR_024845" description="In dbSNP:rs17883142." evidence="4">
    <original>P</original>
    <variation>T</variation>
    <location>
        <position position="112"/>
    </location>
</feature>
<feature type="sequence variant" id="VAR_024846" description="In dbSNP:rs1003483." evidence="2 3 4">
    <original>F</original>
    <variation>V</variation>
    <location>
        <position position="125"/>
    </location>
</feature>
<feature type="sequence variant" id="VAR_024847" description="In dbSNP:rs1003484." evidence="2 3 4">
    <original>T</original>
    <variation>A</variation>
    <location>
        <position position="150"/>
    </location>
</feature>
<feature type="sequence conflict" description="In Ref. 1; BAA90470." evidence="5" ref="1">
    <original>P</original>
    <variation>T</variation>
    <location>
        <position position="163"/>
    </location>
</feature>
<protein>
    <recommendedName>
        <fullName>Putative insulin-like growth factor 2 antisense gene protein</fullName>
    </recommendedName>
    <alternativeName>
        <fullName>IGF2 antisense RNA 1</fullName>
    </alternativeName>
    <alternativeName>
        <fullName>IGF2 antisense gene protein 1</fullName>
    </alternativeName>
    <alternativeName>
        <fullName>PEG8/IGF2AS protein</fullName>
    </alternativeName>
    <alternativeName>
        <fullName>Putative insulin-like growth factor 2 antisense gene protein 1</fullName>
        <shortName>IGF2-AS1</shortName>
    </alternativeName>
</protein>
<keyword id="KW-1267">Proteomics identification</keyword>
<keyword id="KW-1185">Reference proteome</keyword>
<reference key="1">
    <citation type="journal article" date="2000" name="J. Biochem.">
        <title>Expression and imprinting status of human PEG8/IGF2AS, a paternally expressed antisense transcript from the IGF2 locus, in Wilms' tumors.</title>
        <authorList>
            <person name="Okutsu T."/>
            <person name="Kuroiwa Y."/>
            <person name="Kagitani F."/>
            <person name="Kai M."/>
            <person name="Aisaka K."/>
            <person name="Tsutsumi O."/>
            <person name="Kaneko Y."/>
            <person name="Yokomori K."/>
            <person name="Surani M.A."/>
            <person name="Kohda T."/>
            <person name="Kaneko-Ishino T."/>
            <person name="Ishino F."/>
        </authorList>
    </citation>
    <scope>NUCLEOTIDE SEQUENCE [MRNA]</scope>
    <scope>VARIANTS VAL-125 AND ALA-150</scope>
    <source>
        <tissue>Kidney</tissue>
    </source>
</reference>
<reference key="2">
    <citation type="journal article" date="2003" name="Cancer Res.">
        <title>Loss of imprinting of IGF2 sense and antisense transcripts in Wilms' tumor.</title>
        <authorList>
            <person name="Vu T.H."/>
            <person name="Chuyen N.V."/>
            <person name="Li T."/>
            <person name="Hoffman A.R."/>
        </authorList>
    </citation>
    <scope>NUCLEOTIDE SEQUENCE [MRNA]</scope>
    <scope>VARIANTS VAL-125 AND ALA-150</scope>
</reference>
<reference key="3">
    <citation type="submission" date="2003-08" db="EMBL/GenBank/DDBJ databases">
        <authorList>
            <consortium name="SeattleSNPs variation discovery resource"/>
        </authorList>
    </citation>
    <scope>NUCLEOTIDE SEQUENCE [GENOMIC DNA]</scope>
    <scope>VARIANTS ILE-106; THR-112; VAL-125 AND ALA-150</scope>
</reference>
<reference key="4">
    <citation type="journal article" date="2006" name="Nature">
        <title>Human chromosome 11 DNA sequence and analysis including novel gene identification.</title>
        <authorList>
            <person name="Taylor T.D."/>
            <person name="Noguchi H."/>
            <person name="Totoki Y."/>
            <person name="Toyoda A."/>
            <person name="Kuroki Y."/>
            <person name="Dewar K."/>
            <person name="Lloyd C."/>
            <person name="Itoh T."/>
            <person name="Takeda T."/>
            <person name="Kim D.-W."/>
            <person name="She X."/>
            <person name="Barlow K.F."/>
            <person name="Bloom T."/>
            <person name="Bruford E."/>
            <person name="Chang J.L."/>
            <person name="Cuomo C.A."/>
            <person name="Eichler E."/>
            <person name="FitzGerald M.G."/>
            <person name="Jaffe D.B."/>
            <person name="LaButti K."/>
            <person name="Nicol R."/>
            <person name="Park H.-S."/>
            <person name="Seaman C."/>
            <person name="Sougnez C."/>
            <person name="Yang X."/>
            <person name="Zimmer A.R."/>
            <person name="Zody M.C."/>
            <person name="Birren B.W."/>
            <person name="Nusbaum C."/>
            <person name="Fujiyama A."/>
            <person name="Hattori M."/>
            <person name="Rogers J."/>
            <person name="Lander E.S."/>
            <person name="Sakaki Y."/>
        </authorList>
    </citation>
    <scope>NUCLEOTIDE SEQUENCE [LARGE SCALE GENOMIC DNA]</scope>
</reference>
<reference key="5">
    <citation type="journal article" date="2004" name="Genome Res.">
        <title>The status, quality, and expansion of the NIH full-length cDNA project: the Mammalian Gene Collection (MGC).</title>
        <authorList>
            <consortium name="The MGC Project Team"/>
        </authorList>
    </citation>
    <scope>NUCLEOTIDE SEQUENCE [LARGE SCALE MRNA]</scope>
</reference>
<organism>
    <name type="scientific">Homo sapiens</name>
    <name type="common">Human</name>
    <dbReference type="NCBI Taxonomy" id="9606"/>
    <lineage>
        <taxon>Eukaryota</taxon>
        <taxon>Metazoa</taxon>
        <taxon>Chordata</taxon>
        <taxon>Craniata</taxon>
        <taxon>Vertebrata</taxon>
        <taxon>Euteleostomi</taxon>
        <taxon>Mammalia</taxon>
        <taxon>Eutheria</taxon>
        <taxon>Euarchontoglires</taxon>
        <taxon>Primates</taxon>
        <taxon>Haplorrhini</taxon>
        <taxon>Catarrhini</taxon>
        <taxon>Hominidae</taxon>
        <taxon>Homo</taxon>
    </lineage>
</organism>
<proteinExistence type="evidence at protein level"/>
<sequence length="168" mass="18035">MSKRKWRGFRGAQQERAQPPAASPQPCPAPHAGLPGGSRRRAPAPAGQQQMRAESRSGAQRRRGSARRGAHREAGGCVRGRTRSSGSERSNALWQAVDAAEALALSSPLRRPWDQAQHFTNPAPFSKGPQSAPPSPPAGRRRRGADLALTPLAGEGHTRWRQPGRPGK</sequence>